<evidence type="ECO:0000255" key="1">
    <source>
        <dbReference type="HAMAP-Rule" id="MF_01309"/>
    </source>
</evidence>
<evidence type="ECO:0000305" key="2"/>
<organism>
    <name type="scientific">Thermococcus sibiricus (strain DSM 12597 / MM 739)</name>
    <dbReference type="NCBI Taxonomy" id="604354"/>
    <lineage>
        <taxon>Archaea</taxon>
        <taxon>Methanobacteriati</taxon>
        <taxon>Methanobacteriota</taxon>
        <taxon>Thermococci</taxon>
        <taxon>Thermococcales</taxon>
        <taxon>Thermococcaceae</taxon>
        <taxon>Thermococcus</taxon>
    </lineage>
</organism>
<sequence>MAIERYFIKEGIKEMLIDEYLEKELRRAGYGGLDIKKTPLGTKVVIFVERPGFVIGRGGRKIRELTRILERRFNLENPQIEVEEIKNSYFNAKVQATRLAQALERGVHFRRAAYAAIRAIMSNGARGVEIRISGKLTGERAKSVRFYQGYIAKVGNPAETLVSRGYAQALLKLGVLGVKVSIMPPDARLPDEIEIVEKPIEEEVSEQ</sequence>
<feature type="chain" id="PRO_1000214352" description="Small ribosomal subunit protein uS3">
    <location>
        <begin position="1"/>
        <end position="207"/>
    </location>
</feature>
<feature type="domain" description="KH type-2" evidence="1">
    <location>
        <begin position="17"/>
        <end position="86"/>
    </location>
</feature>
<accession>C6A165</accession>
<protein>
    <recommendedName>
        <fullName evidence="1">Small ribosomal subunit protein uS3</fullName>
    </recommendedName>
    <alternativeName>
        <fullName evidence="2">30S ribosomal protein S3</fullName>
    </alternativeName>
</protein>
<name>RS3_THESM</name>
<proteinExistence type="inferred from homology"/>
<reference key="1">
    <citation type="journal article" date="2009" name="Appl. Environ. Microbiol.">
        <title>Metabolic versatility and indigenous origin of the archaeon Thermococcus sibiricus, isolated from a siberian oil reservoir, as revealed by genome analysis.</title>
        <authorList>
            <person name="Mardanov A.V."/>
            <person name="Ravin N.V."/>
            <person name="Svetlitchnyi V.A."/>
            <person name="Beletsky A.V."/>
            <person name="Miroshnichenko M.L."/>
            <person name="Bonch-Osmolovskaya E.A."/>
            <person name="Skryabin K.G."/>
        </authorList>
    </citation>
    <scope>NUCLEOTIDE SEQUENCE [LARGE SCALE GENOMIC DNA]</scope>
    <source>
        <strain>DSM 12597 / MM 739</strain>
    </source>
</reference>
<dbReference type="EMBL" id="CP001463">
    <property type="protein sequence ID" value="ACS89360.1"/>
    <property type="molecule type" value="Genomic_DNA"/>
</dbReference>
<dbReference type="RefSeq" id="WP_015848580.1">
    <property type="nucleotide sequence ID" value="NC_012883.1"/>
</dbReference>
<dbReference type="SMR" id="C6A165"/>
<dbReference type="STRING" id="604354.TSIB_0294"/>
<dbReference type="GeneID" id="8095267"/>
<dbReference type="KEGG" id="tsi:TSIB_0294"/>
<dbReference type="eggNOG" id="arCOG04097">
    <property type="taxonomic scope" value="Archaea"/>
</dbReference>
<dbReference type="HOGENOM" id="CLU_058591_1_1_2"/>
<dbReference type="OrthoDB" id="9126at2157"/>
<dbReference type="Proteomes" id="UP000009079">
    <property type="component" value="Chromosome"/>
</dbReference>
<dbReference type="GO" id="GO:0022627">
    <property type="term" value="C:cytosolic small ribosomal subunit"/>
    <property type="evidence" value="ECO:0007669"/>
    <property type="project" value="TreeGrafter"/>
</dbReference>
<dbReference type="GO" id="GO:0019843">
    <property type="term" value="F:rRNA binding"/>
    <property type="evidence" value="ECO:0007669"/>
    <property type="project" value="UniProtKB-UniRule"/>
</dbReference>
<dbReference type="GO" id="GO:0003735">
    <property type="term" value="F:structural constituent of ribosome"/>
    <property type="evidence" value="ECO:0007669"/>
    <property type="project" value="InterPro"/>
</dbReference>
<dbReference type="GO" id="GO:0006412">
    <property type="term" value="P:translation"/>
    <property type="evidence" value="ECO:0007669"/>
    <property type="project" value="UniProtKB-UniRule"/>
</dbReference>
<dbReference type="CDD" id="cd02411">
    <property type="entry name" value="KH-II_30S_S3_arch"/>
    <property type="match status" value="1"/>
</dbReference>
<dbReference type="FunFam" id="3.30.300.20:FF:000001">
    <property type="entry name" value="30S ribosomal protein S3"/>
    <property type="match status" value="1"/>
</dbReference>
<dbReference type="Gene3D" id="3.30.300.20">
    <property type="match status" value="1"/>
</dbReference>
<dbReference type="Gene3D" id="3.30.1140.32">
    <property type="entry name" value="Ribosomal protein S3, C-terminal domain"/>
    <property type="match status" value="1"/>
</dbReference>
<dbReference type="HAMAP" id="MF_01309_A">
    <property type="entry name" value="Ribosomal_uS3_A"/>
    <property type="match status" value="1"/>
</dbReference>
<dbReference type="InterPro" id="IPR004087">
    <property type="entry name" value="KH_dom"/>
</dbReference>
<dbReference type="InterPro" id="IPR015946">
    <property type="entry name" value="KH_dom-like_a/b"/>
</dbReference>
<dbReference type="InterPro" id="IPR004044">
    <property type="entry name" value="KH_dom_type_2"/>
</dbReference>
<dbReference type="InterPro" id="IPR009019">
    <property type="entry name" value="KH_sf_prok-type"/>
</dbReference>
<dbReference type="InterPro" id="IPR036419">
    <property type="entry name" value="Ribosomal_S3_C_sf"/>
</dbReference>
<dbReference type="InterPro" id="IPR027488">
    <property type="entry name" value="Ribosomal_uS3_arc"/>
</dbReference>
<dbReference type="InterPro" id="IPR001351">
    <property type="entry name" value="Ribosomal_uS3_C"/>
</dbReference>
<dbReference type="InterPro" id="IPR005703">
    <property type="entry name" value="Ribosomal_uS3_euk/arc"/>
</dbReference>
<dbReference type="NCBIfam" id="NF003219">
    <property type="entry name" value="PRK04191.1"/>
    <property type="match status" value="1"/>
</dbReference>
<dbReference type="NCBIfam" id="TIGR01008">
    <property type="entry name" value="uS3_euk_arch"/>
    <property type="match status" value="1"/>
</dbReference>
<dbReference type="PANTHER" id="PTHR11760">
    <property type="entry name" value="30S/40S RIBOSOMAL PROTEIN S3"/>
    <property type="match status" value="1"/>
</dbReference>
<dbReference type="PANTHER" id="PTHR11760:SF32">
    <property type="entry name" value="SMALL RIBOSOMAL SUBUNIT PROTEIN US3"/>
    <property type="match status" value="1"/>
</dbReference>
<dbReference type="Pfam" id="PF07650">
    <property type="entry name" value="KH_2"/>
    <property type="match status" value="1"/>
</dbReference>
<dbReference type="Pfam" id="PF00189">
    <property type="entry name" value="Ribosomal_S3_C"/>
    <property type="match status" value="1"/>
</dbReference>
<dbReference type="SMART" id="SM00322">
    <property type="entry name" value="KH"/>
    <property type="match status" value="1"/>
</dbReference>
<dbReference type="SUPFAM" id="SSF54814">
    <property type="entry name" value="Prokaryotic type KH domain (KH-domain type II)"/>
    <property type="match status" value="1"/>
</dbReference>
<dbReference type="SUPFAM" id="SSF54821">
    <property type="entry name" value="Ribosomal protein S3 C-terminal domain"/>
    <property type="match status" value="1"/>
</dbReference>
<dbReference type="PROSITE" id="PS50823">
    <property type="entry name" value="KH_TYPE_2"/>
    <property type="match status" value="1"/>
</dbReference>
<gene>
    <name evidence="1" type="primary">rps3</name>
    <name type="ordered locus">TSIB_0294</name>
</gene>
<keyword id="KW-1185">Reference proteome</keyword>
<keyword id="KW-0687">Ribonucleoprotein</keyword>
<keyword id="KW-0689">Ribosomal protein</keyword>
<keyword id="KW-0694">RNA-binding</keyword>
<keyword id="KW-0699">rRNA-binding</keyword>
<comment type="function">
    <text evidence="1">Binds the lower part of the 30S subunit head.</text>
</comment>
<comment type="subunit">
    <text evidence="1">Part of the 30S ribosomal subunit.</text>
</comment>
<comment type="similarity">
    <text evidence="1">Belongs to the universal ribosomal protein uS3 family.</text>
</comment>